<gene>
    <name evidence="1" type="primary">coaD</name>
    <name type="ordered locus">GWCH70_1000</name>
</gene>
<reference key="1">
    <citation type="submission" date="2009-06" db="EMBL/GenBank/DDBJ databases">
        <title>Complete sequence of chromosome of Geopacillus sp. WCH70.</title>
        <authorList>
            <consortium name="US DOE Joint Genome Institute"/>
            <person name="Lucas S."/>
            <person name="Copeland A."/>
            <person name="Lapidus A."/>
            <person name="Glavina del Rio T."/>
            <person name="Dalin E."/>
            <person name="Tice H."/>
            <person name="Bruce D."/>
            <person name="Goodwin L."/>
            <person name="Pitluck S."/>
            <person name="Chertkov O."/>
            <person name="Brettin T."/>
            <person name="Detter J.C."/>
            <person name="Han C."/>
            <person name="Larimer F."/>
            <person name="Land M."/>
            <person name="Hauser L."/>
            <person name="Kyrpides N."/>
            <person name="Mikhailova N."/>
            <person name="Brumm P."/>
            <person name="Mead D.A."/>
            <person name="Richardson P."/>
        </authorList>
    </citation>
    <scope>NUCLEOTIDE SEQUENCE [LARGE SCALE GENOMIC DNA]</scope>
    <source>
        <strain>WCH70</strain>
    </source>
</reference>
<evidence type="ECO:0000255" key="1">
    <source>
        <dbReference type="HAMAP-Rule" id="MF_00151"/>
    </source>
</evidence>
<organism>
    <name type="scientific">Geobacillus sp. (strain WCH70)</name>
    <dbReference type="NCBI Taxonomy" id="471223"/>
    <lineage>
        <taxon>Bacteria</taxon>
        <taxon>Bacillati</taxon>
        <taxon>Bacillota</taxon>
        <taxon>Bacilli</taxon>
        <taxon>Bacillales</taxon>
        <taxon>Anoxybacillaceae</taxon>
        <taxon>Geobacillus</taxon>
    </lineage>
</organism>
<proteinExistence type="inferred from homology"/>
<protein>
    <recommendedName>
        <fullName evidence="1">Phosphopantetheine adenylyltransferase</fullName>
        <ecNumber evidence="1">2.7.7.3</ecNumber>
    </recommendedName>
    <alternativeName>
        <fullName evidence="1">Dephospho-CoA pyrophosphorylase</fullName>
    </alternativeName>
    <alternativeName>
        <fullName evidence="1">Pantetheine-phosphate adenylyltransferase</fullName>
        <shortName evidence="1">PPAT</shortName>
    </alternativeName>
</protein>
<dbReference type="EC" id="2.7.7.3" evidence="1"/>
<dbReference type="EMBL" id="CP001638">
    <property type="protein sequence ID" value="ACS23860.1"/>
    <property type="molecule type" value="Genomic_DNA"/>
</dbReference>
<dbReference type="SMR" id="C5D8K3"/>
<dbReference type="STRING" id="471223.GWCH70_1000"/>
<dbReference type="KEGG" id="gwc:GWCH70_1000"/>
<dbReference type="eggNOG" id="COG0669">
    <property type="taxonomic scope" value="Bacteria"/>
</dbReference>
<dbReference type="HOGENOM" id="CLU_100149_0_1_9"/>
<dbReference type="OrthoDB" id="9806661at2"/>
<dbReference type="UniPathway" id="UPA00241">
    <property type="reaction ID" value="UER00355"/>
</dbReference>
<dbReference type="GO" id="GO:0005737">
    <property type="term" value="C:cytoplasm"/>
    <property type="evidence" value="ECO:0007669"/>
    <property type="project" value="UniProtKB-SubCell"/>
</dbReference>
<dbReference type="GO" id="GO:0005524">
    <property type="term" value="F:ATP binding"/>
    <property type="evidence" value="ECO:0007669"/>
    <property type="project" value="UniProtKB-KW"/>
</dbReference>
<dbReference type="GO" id="GO:0004595">
    <property type="term" value="F:pantetheine-phosphate adenylyltransferase activity"/>
    <property type="evidence" value="ECO:0007669"/>
    <property type="project" value="UniProtKB-UniRule"/>
</dbReference>
<dbReference type="GO" id="GO:0015937">
    <property type="term" value="P:coenzyme A biosynthetic process"/>
    <property type="evidence" value="ECO:0007669"/>
    <property type="project" value="UniProtKB-UniRule"/>
</dbReference>
<dbReference type="CDD" id="cd02163">
    <property type="entry name" value="PPAT"/>
    <property type="match status" value="1"/>
</dbReference>
<dbReference type="FunFam" id="3.40.50.620:FF:000012">
    <property type="entry name" value="Phosphopantetheine adenylyltransferase"/>
    <property type="match status" value="1"/>
</dbReference>
<dbReference type="Gene3D" id="3.40.50.620">
    <property type="entry name" value="HUPs"/>
    <property type="match status" value="1"/>
</dbReference>
<dbReference type="HAMAP" id="MF_00151">
    <property type="entry name" value="PPAT_bact"/>
    <property type="match status" value="1"/>
</dbReference>
<dbReference type="InterPro" id="IPR004821">
    <property type="entry name" value="Cyt_trans-like"/>
</dbReference>
<dbReference type="InterPro" id="IPR001980">
    <property type="entry name" value="PPAT"/>
</dbReference>
<dbReference type="InterPro" id="IPR014729">
    <property type="entry name" value="Rossmann-like_a/b/a_fold"/>
</dbReference>
<dbReference type="NCBIfam" id="TIGR01510">
    <property type="entry name" value="coaD_prev_kdtB"/>
    <property type="match status" value="1"/>
</dbReference>
<dbReference type="NCBIfam" id="TIGR00125">
    <property type="entry name" value="cyt_tran_rel"/>
    <property type="match status" value="1"/>
</dbReference>
<dbReference type="PANTHER" id="PTHR21342">
    <property type="entry name" value="PHOSPHOPANTETHEINE ADENYLYLTRANSFERASE"/>
    <property type="match status" value="1"/>
</dbReference>
<dbReference type="PANTHER" id="PTHR21342:SF1">
    <property type="entry name" value="PHOSPHOPANTETHEINE ADENYLYLTRANSFERASE"/>
    <property type="match status" value="1"/>
</dbReference>
<dbReference type="Pfam" id="PF01467">
    <property type="entry name" value="CTP_transf_like"/>
    <property type="match status" value="1"/>
</dbReference>
<dbReference type="PRINTS" id="PR01020">
    <property type="entry name" value="LPSBIOSNTHSS"/>
</dbReference>
<dbReference type="SUPFAM" id="SSF52374">
    <property type="entry name" value="Nucleotidylyl transferase"/>
    <property type="match status" value="1"/>
</dbReference>
<feature type="chain" id="PRO_1000203424" description="Phosphopantetheine adenylyltransferase">
    <location>
        <begin position="1"/>
        <end position="169"/>
    </location>
</feature>
<feature type="binding site" evidence="1">
    <location>
        <begin position="10"/>
        <end position="11"/>
    </location>
    <ligand>
        <name>ATP</name>
        <dbReference type="ChEBI" id="CHEBI:30616"/>
    </ligand>
</feature>
<feature type="binding site" evidence="1">
    <location>
        <position position="10"/>
    </location>
    <ligand>
        <name>substrate</name>
    </ligand>
</feature>
<feature type="binding site" evidence="1">
    <location>
        <position position="18"/>
    </location>
    <ligand>
        <name>ATP</name>
        <dbReference type="ChEBI" id="CHEBI:30616"/>
    </ligand>
</feature>
<feature type="binding site" evidence="1">
    <location>
        <position position="42"/>
    </location>
    <ligand>
        <name>substrate</name>
    </ligand>
</feature>
<feature type="binding site" evidence="1">
    <location>
        <position position="74"/>
    </location>
    <ligand>
        <name>substrate</name>
    </ligand>
</feature>
<feature type="binding site" evidence="1">
    <location>
        <position position="88"/>
    </location>
    <ligand>
        <name>substrate</name>
    </ligand>
</feature>
<feature type="binding site" evidence="1">
    <location>
        <begin position="89"/>
        <end position="91"/>
    </location>
    <ligand>
        <name>ATP</name>
        <dbReference type="ChEBI" id="CHEBI:30616"/>
    </ligand>
</feature>
<feature type="binding site" evidence="1">
    <location>
        <position position="99"/>
    </location>
    <ligand>
        <name>ATP</name>
        <dbReference type="ChEBI" id="CHEBI:30616"/>
    </ligand>
</feature>
<feature type="binding site" evidence="1">
    <location>
        <begin position="124"/>
        <end position="130"/>
    </location>
    <ligand>
        <name>ATP</name>
        <dbReference type="ChEBI" id="CHEBI:30616"/>
    </ligand>
</feature>
<feature type="site" description="Transition state stabilizer" evidence="1">
    <location>
        <position position="18"/>
    </location>
</feature>
<keyword id="KW-0067">ATP-binding</keyword>
<keyword id="KW-0173">Coenzyme A biosynthesis</keyword>
<keyword id="KW-0963">Cytoplasm</keyword>
<keyword id="KW-0460">Magnesium</keyword>
<keyword id="KW-0547">Nucleotide-binding</keyword>
<keyword id="KW-0548">Nucleotidyltransferase</keyword>
<keyword id="KW-0808">Transferase</keyword>
<comment type="function">
    <text evidence="1">Reversibly transfers an adenylyl group from ATP to 4'-phosphopantetheine, yielding dephospho-CoA (dPCoA) and pyrophosphate.</text>
</comment>
<comment type="catalytic activity">
    <reaction evidence="1">
        <text>(R)-4'-phosphopantetheine + ATP + H(+) = 3'-dephospho-CoA + diphosphate</text>
        <dbReference type="Rhea" id="RHEA:19801"/>
        <dbReference type="ChEBI" id="CHEBI:15378"/>
        <dbReference type="ChEBI" id="CHEBI:30616"/>
        <dbReference type="ChEBI" id="CHEBI:33019"/>
        <dbReference type="ChEBI" id="CHEBI:57328"/>
        <dbReference type="ChEBI" id="CHEBI:61723"/>
        <dbReference type="EC" id="2.7.7.3"/>
    </reaction>
</comment>
<comment type="cofactor">
    <cofactor evidence="1">
        <name>Mg(2+)</name>
        <dbReference type="ChEBI" id="CHEBI:18420"/>
    </cofactor>
</comment>
<comment type="pathway">
    <text evidence="1">Cofactor biosynthesis; coenzyme A biosynthesis; CoA from (R)-pantothenate: step 4/5.</text>
</comment>
<comment type="subunit">
    <text evidence="1">Homohexamer.</text>
</comment>
<comment type="subcellular location">
    <subcellularLocation>
        <location evidence="1">Cytoplasm</location>
    </subcellularLocation>
</comment>
<comment type="similarity">
    <text evidence="1">Belongs to the bacterial CoaD family.</text>
</comment>
<sequence length="169" mass="19048">MASIAVCPGSFDPVTYGHLDIIRRGAKVFDQVYVAVLNNSSKKPLFSVEERIELLREVTRPFPNVIVESFHGLLVDYARSKNASAILRGLRAVSDFEYEMQITSMNRVLDENIETFFMMTNSQYAFLSSSIVKEVAKYNGNISDLVPPVVEEALRKKFASLTSNERNES</sequence>
<name>COAD_GEOSW</name>
<accession>C5D8K3</accession>